<keyword id="KW-0150">Chloroplast</keyword>
<keyword id="KW-0903">Direct protein sequencing</keyword>
<keyword id="KW-0602">Photosynthesis</keyword>
<keyword id="KW-0604">Photosystem II</keyword>
<keyword id="KW-0934">Plastid</keyword>
<keyword id="KW-1185">Reference proteome</keyword>
<keyword id="KW-0793">Thylakoid</keyword>
<feature type="chain" id="PRO_0000217374" description="Photosystem II stability/assembly factor HCF136, chloroplastic">
    <location>
        <begin position="1" status="less than"/>
        <end position="26" status="greater than"/>
    </location>
</feature>
<feature type="non-terminal residue">
    <location>
        <position position="1"/>
    </location>
</feature>
<feature type="non-terminal residue">
    <location>
        <position position="26"/>
    </location>
</feature>
<organism>
    <name type="scientific">Populus euphratica</name>
    <name type="common">Euphrates poplar</name>
    <dbReference type="NCBI Taxonomy" id="75702"/>
    <lineage>
        <taxon>Eukaryota</taxon>
        <taxon>Viridiplantae</taxon>
        <taxon>Streptophyta</taxon>
        <taxon>Embryophyta</taxon>
        <taxon>Tracheophyta</taxon>
        <taxon>Spermatophyta</taxon>
        <taxon>Magnoliopsida</taxon>
        <taxon>eudicotyledons</taxon>
        <taxon>Gunneridae</taxon>
        <taxon>Pentapetalae</taxon>
        <taxon>rosids</taxon>
        <taxon>fabids</taxon>
        <taxon>Malpighiales</taxon>
        <taxon>Salicaceae</taxon>
        <taxon>Saliceae</taxon>
        <taxon>Populus</taxon>
    </lineage>
</organism>
<protein>
    <recommendedName>
        <fullName>Photosystem II stability/assembly factor HCF136, chloroplastic</fullName>
    </recommendedName>
</protein>
<dbReference type="Proteomes" id="UP000694918">
    <property type="component" value="Unplaced"/>
</dbReference>
<dbReference type="GO" id="GO:0009543">
    <property type="term" value="C:chloroplast thylakoid lumen"/>
    <property type="evidence" value="ECO:0007669"/>
    <property type="project" value="UniProtKB-SubCell"/>
</dbReference>
<dbReference type="GO" id="GO:0009523">
    <property type="term" value="C:photosystem II"/>
    <property type="evidence" value="ECO:0007669"/>
    <property type="project" value="UniProtKB-KW"/>
</dbReference>
<dbReference type="GO" id="GO:0015979">
    <property type="term" value="P:photosynthesis"/>
    <property type="evidence" value="ECO:0007669"/>
    <property type="project" value="UniProtKB-KW"/>
</dbReference>
<comment type="function">
    <text evidence="2">Essential for photosystem II (PSII) biogenesis; required for assembly of an early intermediate in PSII assembly that includes D2 (psbD) and cytochrome b559.</text>
</comment>
<comment type="subcellular location">
    <subcellularLocation>
        <location evidence="2">Plastid</location>
        <location evidence="2">Chloroplast thylakoid lumen</location>
    </subcellularLocation>
</comment>
<comment type="domain">
    <text evidence="1">A 7-bladed beta-propeller torus, about 54 by 55 Angstroms, with a depth of about 25 Angstroms and a central pore.</text>
</comment>
<comment type="similarity">
    <text evidence="3">Belongs to the Ycf48 family.</text>
</comment>
<sequence>GTGITEEFEEVPVQSRGFGILDVGYR</sequence>
<proteinExistence type="evidence at protein level"/>
<reference key="1">
    <citation type="journal article" date="2006" name="Ann. Bot.">
        <title>Proteome profiling of Populus euphratica Oliv. upon heat stress.</title>
        <authorList>
            <person name="Ferreira S."/>
            <person name="Hjernoe K."/>
            <person name="Larsen M."/>
            <person name="Wingsle G."/>
            <person name="Larsen P."/>
            <person name="Fey S."/>
            <person name="Roepstorff P."/>
            <person name="Pais M.S."/>
        </authorList>
    </citation>
    <scope>PROTEIN SEQUENCE</scope>
    <source>
        <tissue>Leaf</tissue>
    </source>
</reference>
<accession>P84561</accession>
<name>P2SAF_POPEU</name>
<evidence type="ECO:0000250" key="1">
    <source>
        <dbReference type="UniProtKB" id="M1VJU3"/>
    </source>
</evidence>
<evidence type="ECO:0000250" key="2">
    <source>
        <dbReference type="UniProtKB" id="O82660"/>
    </source>
</evidence>
<evidence type="ECO:0000305" key="3"/>